<protein>
    <recommendedName>
        <fullName>Unconventional myosin-Va</fullName>
    </recommendedName>
    <alternativeName>
        <fullName>Dilute myosin heavy chain, non-muscle</fullName>
    </alternativeName>
</protein>
<accession>Q9QYF3</accession>
<reference key="1">
    <citation type="journal article" date="2000" name="Mamm. Genome">
        <title>Identification of a novel myosin-Va mutation in an ataxic mutant rat, dilute-opisthotonus.</title>
        <authorList>
            <person name="Futaki S."/>
            <person name="Takagishi Y."/>
            <person name="Hayashi Y."/>
            <person name="Ohmori S."/>
            <person name="Kanou Y."/>
            <person name="Inouye M."/>
            <person name="Oda S."/>
            <person name="Seo H."/>
            <person name="Iwaikawa Y."/>
            <person name="Murata Y."/>
        </authorList>
    </citation>
    <scope>NUCLEOTIDE SEQUENCE [MRNA]</scope>
</reference>
<reference key="2">
    <citation type="journal article" date="2006" name="Proc. Natl. Acad. Sci. U.S.A.">
        <title>Quantitative phosphoproteomics of vasopressin-sensitive renal cells: regulation of aquaporin-2 phosphorylation at two sites.</title>
        <authorList>
            <person name="Hoffert J.D."/>
            <person name="Pisitkun T."/>
            <person name="Wang G."/>
            <person name="Shen R.-F."/>
            <person name="Knepper M.A."/>
        </authorList>
    </citation>
    <scope>PHOSPHORYLATION [LARGE SCALE ANALYSIS] AT THR-1032</scope>
    <scope>IDENTIFICATION BY MASS SPECTROMETRY [LARGE SCALE ANALYSIS]</scope>
</reference>
<reference key="3">
    <citation type="journal article" date="2009" name="J. Cell Sci.">
        <title>Myosin-Va-interacting protein, RILPL2, controls cell shape and neuronal morphogenesis via Rac signaling.</title>
        <authorList>
            <person name="Lise M.F."/>
            <person name="Srivastava D.P."/>
            <person name="Arstikaitis P."/>
            <person name="Lett R.L."/>
            <person name="Sheta R."/>
            <person name="Viswanathan V."/>
            <person name="Penzes P."/>
            <person name="O'Connor T.P."/>
            <person name="El-Husseini A."/>
        </authorList>
    </citation>
    <scope>FUNCTION</scope>
    <scope>INTERACTION WITH RIPL2</scope>
</reference>
<reference key="4">
    <citation type="journal article" date="2012" name="Nat. Commun.">
        <title>Quantitative maps of protein phosphorylation sites across 14 different rat organs and tissues.</title>
        <authorList>
            <person name="Lundby A."/>
            <person name="Secher A."/>
            <person name="Lage K."/>
            <person name="Nordsborg N.B."/>
            <person name="Dmytriyev A."/>
            <person name="Lundby C."/>
            <person name="Olsen J.V."/>
        </authorList>
    </citation>
    <scope>PHOSPHORYLATION [LARGE SCALE ANALYSIS] AT SER-600; SER-1425 AND SER-1625</scope>
    <scope>IDENTIFICATION BY MASS SPECTROMETRY [LARGE SCALE ANALYSIS]</scope>
</reference>
<dbReference type="EMBL" id="AB035736">
    <property type="protein sequence ID" value="BAA88350.1"/>
    <property type="molecule type" value="mRNA"/>
</dbReference>
<dbReference type="RefSeq" id="NP_071514.1">
    <property type="nucleotide sequence ID" value="NM_022178.1"/>
</dbReference>
<dbReference type="SMR" id="Q9QYF3"/>
<dbReference type="BioGRID" id="247098">
    <property type="interactions" value="8"/>
</dbReference>
<dbReference type="FunCoup" id="Q9QYF3">
    <property type="interactions" value="2159"/>
</dbReference>
<dbReference type="IntAct" id="Q9QYF3">
    <property type="interactions" value="3"/>
</dbReference>
<dbReference type="MINT" id="Q9QYF3"/>
<dbReference type="STRING" id="10116.ENSRNOP00000073223"/>
<dbReference type="GlyGen" id="Q9QYF3">
    <property type="glycosylation" value="2 sites, 1 O-linked glycan (1 site)"/>
</dbReference>
<dbReference type="iPTMnet" id="Q9QYF3"/>
<dbReference type="PhosphoSitePlus" id="Q9QYF3"/>
<dbReference type="jPOST" id="Q9QYF3"/>
<dbReference type="GeneID" id="25017"/>
<dbReference type="KEGG" id="rno:25017"/>
<dbReference type="UCSC" id="RGD:3143">
    <property type="organism name" value="rat"/>
</dbReference>
<dbReference type="AGR" id="RGD:3143"/>
<dbReference type="CTD" id="4644"/>
<dbReference type="RGD" id="3143">
    <property type="gene designation" value="Myo5a"/>
</dbReference>
<dbReference type="InParanoid" id="Q9QYF3"/>
<dbReference type="OrthoDB" id="6108017at2759"/>
<dbReference type="PhylomeDB" id="Q9QYF3"/>
<dbReference type="Reactome" id="R-RNO-2029482">
    <property type="pathway name" value="Regulation of actin dynamics for phagocytic cup formation"/>
</dbReference>
<dbReference type="Reactome" id="R-RNO-9824585">
    <property type="pathway name" value="Regulation of MITF-M-dependent genes involved in pigmentation"/>
</dbReference>
<dbReference type="PRO" id="PR:Q9QYF3"/>
<dbReference type="Proteomes" id="UP000002494">
    <property type="component" value="Unplaced"/>
</dbReference>
<dbReference type="GO" id="GO:0015629">
    <property type="term" value="C:actin cytoskeleton"/>
    <property type="evidence" value="ECO:0000318"/>
    <property type="project" value="GO_Central"/>
</dbReference>
<dbReference type="GO" id="GO:0005884">
    <property type="term" value="C:actin filament"/>
    <property type="evidence" value="ECO:0000266"/>
    <property type="project" value="RGD"/>
</dbReference>
<dbReference type="GO" id="GO:0042641">
    <property type="term" value="C:actomyosin"/>
    <property type="evidence" value="ECO:0000266"/>
    <property type="project" value="RGD"/>
</dbReference>
<dbReference type="GO" id="GO:0042642">
    <property type="term" value="C:actomyosin, myosin complex part"/>
    <property type="evidence" value="ECO:0000314"/>
    <property type="project" value="RGD"/>
</dbReference>
<dbReference type="GO" id="GO:0030424">
    <property type="term" value="C:axon"/>
    <property type="evidence" value="ECO:0000314"/>
    <property type="project" value="RGD"/>
</dbReference>
<dbReference type="GO" id="GO:0005737">
    <property type="term" value="C:cytoplasm"/>
    <property type="evidence" value="ECO:0000266"/>
    <property type="project" value="RGD"/>
</dbReference>
<dbReference type="GO" id="GO:0005829">
    <property type="term" value="C:cytosol"/>
    <property type="evidence" value="ECO:0000266"/>
    <property type="project" value="RGD"/>
</dbReference>
<dbReference type="GO" id="GO:0030425">
    <property type="term" value="C:dendrite"/>
    <property type="evidence" value="ECO:0000314"/>
    <property type="project" value="RGD"/>
</dbReference>
<dbReference type="GO" id="GO:0005769">
    <property type="term" value="C:early endosome"/>
    <property type="evidence" value="ECO:0000266"/>
    <property type="project" value="RGD"/>
</dbReference>
<dbReference type="GO" id="GO:0005783">
    <property type="term" value="C:endoplasmic reticulum"/>
    <property type="evidence" value="ECO:0000266"/>
    <property type="project" value="RGD"/>
</dbReference>
<dbReference type="GO" id="GO:0032433">
    <property type="term" value="C:filopodium tip"/>
    <property type="evidence" value="ECO:0000266"/>
    <property type="project" value="RGD"/>
</dbReference>
<dbReference type="GO" id="GO:0098978">
    <property type="term" value="C:glutamatergic synapse"/>
    <property type="evidence" value="ECO:0000314"/>
    <property type="project" value="SynGO"/>
</dbReference>
<dbReference type="GO" id="GO:0005794">
    <property type="term" value="C:Golgi apparatus"/>
    <property type="evidence" value="ECO:0000266"/>
    <property type="project" value="RGD"/>
</dbReference>
<dbReference type="GO" id="GO:0032593">
    <property type="term" value="C:insulin-responsive compartment"/>
    <property type="evidence" value="ECO:0000250"/>
    <property type="project" value="UniProtKB"/>
</dbReference>
<dbReference type="GO" id="GO:0005882">
    <property type="term" value="C:intermediate filament"/>
    <property type="evidence" value="ECO:0000266"/>
    <property type="project" value="RGD"/>
</dbReference>
<dbReference type="GO" id="GO:0005770">
    <property type="term" value="C:late endosome"/>
    <property type="evidence" value="ECO:0000266"/>
    <property type="project" value="RGD"/>
</dbReference>
<dbReference type="GO" id="GO:0005764">
    <property type="term" value="C:lysosome"/>
    <property type="evidence" value="ECO:0000266"/>
    <property type="project" value="RGD"/>
</dbReference>
<dbReference type="GO" id="GO:0042470">
    <property type="term" value="C:melanosome"/>
    <property type="evidence" value="ECO:0000266"/>
    <property type="project" value="RGD"/>
</dbReference>
<dbReference type="GO" id="GO:0016020">
    <property type="term" value="C:membrane"/>
    <property type="evidence" value="ECO:0000266"/>
    <property type="project" value="RGD"/>
</dbReference>
<dbReference type="GO" id="GO:0016459">
    <property type="term" value="C:myosin complex"/>
    <property type="evidence" value="ECO:0000266"/>
    <property type="project" value="RGD"/>
</dbReference>
<dbReference type="GO" id="GO:0043025">
    <property type="term" value="C:neuronal cell body"/>
    <property type="evidence" value="ECO:0000314"/>
    <property type="project" value="RGD"/>
</dbReference>
<dbReference type="GO" id="GO:0005777">
    <property type="term" value="C:peroxisome"/>
    <property type="evidence" value="ECO:0000266"/>
    <property type="project" value="RGD"/>
</dbReference>
<dbReference type="GO" id="GO:0001750">
    <property type="term" value="C:photoreceptor outer segment"/>
    <property type="evidence" value="ECO:0000266"/>
    <property type="project" value="RGD"/>
</dbReference>
<dbReference type="GO" id="GO:0098794">
    <property type="term" value="C:postsynapse"/>
    <property type="evidence" value="ECO:0000314"/>
    <property type="project" value="SynGO"/>
</dbReference>
<dbReference type="GO" id="GO:0098871">
    <property type="term" value="C:postsynaptic actin cytoskeleton"/>
    <property type="evidence" value="ECO:0000314"/>
    <property type="project" value="SynGO"/>
</dbReference>
<dbReference type="GO" id="GO:0055037">
    <property type="term" value="C:recycling endosome"/>
    <property type="evidence" value="ECO:0000314"/>
    <property type="project" value="RGD"/>
</dbReference>
<dbReference type="GO" id="GO:1990904">
    <property type="term" value="C:ribonucleoprotein complex"/>
    <property type="evidence" value="ECO:0000314"/>
    <property type="project" value="RGD"/>
</dbReference>
<dbReference type="GO" id="GO:0001726">
    <property type="term" value="C:ruffle"/>
    <property type="evidence" value="ECO:0000266"/>
    <property type="project" value="RGD"/>
</dbReference>
<dbReference type="GO" id="GO:0098685">
    <property type="term" value="C:Schaffer collateral - CA1 synapse"/>
    <property type="evidence" value="ECO:0000314"/>
    <property type="project" value="SynGO"/>
</dbReference>
<dbReference type="GO" id="GO:0030141">
    <property type="term" value="C:secretory granule"/>
    <property type="evidence" value="ECO:0000314"/>
    <property type="project" value="RGD"/>
</dbReference>
<dbReference type="GO" id="GO:0005790">
    <property type="term" value="C:smooth endoplasmic reticulum"/>
    <property type="evidence" value="ECO:0000266"/>
    <property type="project" value="RGD"/>
</dbReference>
<dbReference type="GO" id="GO:0008021">
    <property type="term" value="C:synaptic vesicle"/>
    <property type="evidence" value="ECO:0000314"/>
    <property type="project" value="RGD"/>
</dbReference>
<dbReference type="GO" id="GO:0016461">
    <property type="term" value="C:unconventional myosin complex"/>
    <property type="evidence" value="ECO:0000266"/>
    <property type="project" value="RGD"/>
</dbReference>
<dbReference type="GO" id="GO:0031982">
    <property type="term" value="C:vesicle"/>
    <property type="evidence" value="ECO:0000266"/>
    <property type="project" value="RGD"/>
</dbReference>
<dbReference type="GO" id="GO:0003779">
    <property type="term" value="F:actin binding"/>
    <property type="evidence" value="ECO:0000266"/>
    <property type="project" value="RGD"/>
</dbReference>
<dbReference type="GO" id="GO:0051015">
    <property type="term" value="F:actin filament binding"/>
    <property type="evidence" value="ECO:0000318"/>
    <property type="project" value="GO_Central"/>
</dbReference>
<dbReference type="GO" id="GO:0005524">
    <property type="term" value="F:ATP binding"/>
    <property type="evidence" value="ECO:0000314"/>
    <property type="project" value="RGD"/>
</dbReference>
<dbReference type="GO" id="GO:0016887">
    <property type="term" value="F:ATP hydrolysis activity"/>
    <property type="evidence" value="ECO:0000250"/>
    <property type="project" value="UniProtKB"/>
</dbReference>
<dbReference type="GO" id="GO:0043008">
    <property type="term" value="F:ATP-dependent protein binding"/>
    <property type="evidence" value="ECO:0000353"/>
    <property type="project" value="RGD"/>
</dbReference>
<dbReference type="GO" id="GO:0005509">
    <property type="term" value="F:calcium ion binding"/>
    <property type="evidence" value="ECO:0000266"/>
    <property type="project" value="RGD"/>
</dbReference>
<dbReference type="GO" id="GO:0048306">
    <property type="term" value="F:calcium-dependent protein binding"/>
    <property type="evidence" value="ECO:0000353"/>
    <property type="project" value="RGD"/>
</dbReference>
<dbReference type="GO" id="GO:0005516">
    <property type="term" value="F:calmodulin binding"/>
    <property type="evidence" value="ECO:0000266"/>
    <property type="project" value="RGD"/>
</dbReference>
<dbReference type="GO" id="GO:0003774">
    <property type="term" value="F:cytoskeletal motor activity"/>
    <property type="evidence" value="ECO:0000315"/>
    <property type="project" value="RGD"/>
</dbReference>
<dbReference type="GO" id="GO:0097718">
    <property type="term" value="F:disordered domain specific binding"/>
    <property type="evidence" value="ECO:0000266"/>
    <property type="project" value="RGD"/>
</dbReference>
<dbReference type="GO" id="GO:0042802">
    <property type="term" value="F:identical protein binding"/>
    <property type="evidence" value="ECO:0000266"/>
    <property type="project" value="RGD"/>
</dbReference>
<dbReference type="GO" id="GO:0000146">
    <property type="term" value="F:microfilament motor activity"/>
    <property type="evidence" value="ECO:0000314"/>
    <property type="project" value="RGD"/>
</dbReference>
<dbReference type="GO" id="GO:0019901">
    <property type="term" value="F:protein kinase binding"/>
    <property type="evidence" value="ECO:0000353"/>
    <property type="project" value="RGD"/>
</dbReference>
<dbReference type="GO" id="GO:0044877">
    <property type="term" value="F:protein-containing complex binding"/>
    <property type="evidence" value="ECO:0000314"/>
    <property type="project" value="RGD"/>
</dbReference>
<dbReference type="GO" id="GO:0031267">
    <property type="term" value="F:small GTPase binding"/>
    <property type="evidence" value="ECO:0000266"/>
    <property type="project" value="RGD"/>
</dbReference>
<dbReference type="GO" id="GO:0000149">
    <property type="term" value="F:SNARE binding"/>
    <property type="evidence" value="ECO:0000353"/>
    <property type="project" value="RGD"/>
</dbReference>
<dbReference type="GO" id="GO:0017075">
    <property type="term" value="F:syntaxin-1 binding"/>
    <property type="evidence" value="ECO:0000353"/>
    <property type="project" value="RGD"/>
</dbReference>
<dbReference type="GO" id="GO:0007015">
    <property type="term" value="P:actin filament organization"/>
    <property type="evidence" value="ECO:0000318"/>
    <property type="project" value="GO_Central"/>
</dbReference>
<dbReference type="GO" id="GO:0030048">
    <property type="term" value="P:actin filament-based movement"/>
    <property type="evidence" value="ECO:0000314"/>
    <property type="project" value="RGD"/>
</dbReference>
<dbReference type="GO" id="GO:0099640">
    <property type="term" value="P:axo-dendritic protein transport"/>
    <property type="evidence" value="ECO:0000315"/>
    <property type="project" value="RGD"/>
</dbReference>
<dbReference type="GO" id="GO:0032869">
    <property type="term" value="P:cellular response to insulin stimulus"/>
    <property type="evidence" value="ECO:0000250"/>
    <property type="project" value="UniProtKB"/>
</dbReference>
<dbReference type="GO" id="GO:0007268">
    <property type="term" value="P:chemical synaptic transmission"/>
    <property type="evidence" value="ECO:0000266"/>
    <property type="project" value="RGD"/>
</dbReference>
<dbReference type="GO" id="GO:0048066">
    <property type="term" value="P:developmental pigmentation"/>
    <property type="evidence" value="ECO:0000266"/>
    <property type="project" value="RGD"/>
</dbReference>
<dbReference type="GO" id="GO:0042417">
    <property type="term" value="P:dopamine metabolic process"/>
    <property type="evidence" value="ECO:0000315"/>
    <property type="project" value="RGD"/>
</dbReference>
<dbReference type="GO" id="GO:0051643">
    <property type="term" value="P:endoplasmic reticulum localization"/>
    <property type="evidence" value="ECO:0000266"/>
    <property type="project" value="RGD"/>
</dbReference>
<dbReference type="GO" id="GO:0099089">
    <property type="term" value="P:establishment of endoplasmic reticulum localization to postsynapse"/>
    <property type="evidence" value="ECO:0000266"/>
    <property type="project" value="RGD"/>
</dbReference>
<dbReference type="GO" id="GO:0006887">
    <property type="term" value="P:exocytosis"/>
    <property type="evidence" value="ECO:0000266"/>
    <property type="project" value="RGD"/>
</dbReference>
<dbReference type="GO" id="GO:0048820">
    <property type="term" value="P:hair follicle maturation"/>
    <property type="evidence" value="ECO:0000266"/>
    <property type="project" value="RGD"/>
</dbReference>
<dbReference type="GO" id="GO:0030073">
    <property type="term" value="P:insulin secretion"/>
    <property type="evidence" value="ECO:0000266"/>
    <property type="project" value="RGD"/>
</dbReference>
<dbReference type="GO" id="GO:0031987">
    <property type="term" value="P:locomotion involved in locomotory behavior"/>
    <property type="evidence" value="ECO:0000266"/>
    <property type="project" value="RGD"/>
</dbReference>
<dbReference type="GO" id="GO:0042759">
    <property type="term" value="P:long-chain fatty acid biosynthetic process"/>
    <property type="evidence" value="ECO:0000266"/>
    <property type="project" value="RGD"/>
</dbReference>
<dbReference type="GO" id="GO:0016236">
    <property type="term" value="P:macroautophagy"/>
    <property type="evidence" value="ECO:0000315"/>
    <property type="project" value="RGD"/>
</dbReference>
<dbReference type="GO" id="GO:0042438">
    <property type="term" value="P:melanin biosynthetic process"/>
    <property type="evidence" value="ECO:0000266"/>
    <property type="project" value="RGD"/>
</dbReference>
<dbReference type="GO" id="GO:0006582">
    <property type="term" value="P:melanin metabolic process"/>
    <property type="evidence" value="ECO:0000266"/>
    <property type="project" value="RGD"/>
</dbReference>
<dbReference type="GO" id="GO:0030318">
    <property type="term" value="P:melanocyte differentiation"/>
    <property type="evidence" value="ECO:0000266"/>
    <property type="project" value="RGD"/>
</dbReference>
<dbReference type="GO" id="GO:0032400">
    <property type="term" value="P:melanosome localization"/>
    <property type="evidence" value="ECO:0000266"/>
    <property type="project" value="RGD"/>
</dbReference>
<dbReference type="GO" id="GO:0032402">
    <property type="term" value="P:melanosome transport"/>
    <property type="evidence" value="ECO:0000266"/>
    <property type="project" value="RGD"/>
</dbReference>
<dbReference type="GO" id="GO:0042552">
    <property type="term" value="P:myelination"/>
    <property type="evidence" value="ECO:0000266"/>
    <property type="project" value="RGD"/>
</dbReference>
<dbReference type="GO" id="GO:0033602">
    <property type="term" value="P:negative regulation of dopamine secretion"/>
    <property type="evidence" value="ECO:0000315"/>
    <property type="project" value="RGD"/>
</dbReference>
<dbReference type="GO" id="GO:0051967">
    <property type="term" value="P:negative regulation of synaptic transmission, glutamatergic"/>
    <property type="evidence" value="ECO:0000315"/>
    <property type="project" value="RGD"/>
</dbReference>
<dbReference type="GO" id="GO:0050885">
    <property type="term" value="P:neuromuscular process controlling balance"/>
    <property type="evidence" value="ECO:0000266"/>
    <property type="project" value="RGD"/>
</dbReference>
<dbReference type="GO" id="GO:0042476">
    <property type="term" value="P:odontogenesis"/>
    <property type="evidence" value="ECO:0000266"/>
    <property type="project" value="RGD"/>
</dbReference>
<dbReference type="GO" id="GO:0043473">
    <property type="term" value="P:pigmentation"/>
    <property type="evidence" value="ECO:0000315"/>
    <property type="project" value="MGI"/>
</dbReference>
<dbReference type="GO" id="GO:1900078">
    <property type="term" value="P:positive regulation of cellular response to insulin stimulus"/>
    <property type="evidence" value="ECO:0000315"/>
    <property type="project" value="RGD"/>
</dbReference>
<dbReference type="GO" id="GO:1903078">
    <property type="term" value="P:positive regulation of protein localization to plasma membrane"/>
    <property type="evidence" value="ECO:0000315"/>
    <property type="project" value="RGD"/>
</dbReference>
<dbReference type="GO" id="GO:1904754">
    <property type="term" value="P:positive regulation of vascular associated smooth muscle cell migration"/>
    <property type="evidence" value="ECO:0000315"/>
    <property type="project" value="RGD"/>
</dbReference>
<dbReference type="GO" id="GO:0006892">
    <property type="term" value="P:post-Golgi vesicle-mediated transport"/>
    <property type="evidence" value="ECO:0000266"/>
    <property type="project" value="RGD"/>
</dbReference>
<dbReference type="GO" id="GO:0072659">
    <property type="term" value="P:protein localization to plasma membrane"/>
    <property type="evidence" value="ECO:0000250"/>
    <property type="project" value="UniProtKB"/>
</dbReference>
<dbReference type="GO" id="GO:0065003">
    <property type="term" value="P:protein-containing complex assembly"/>
    <property type="evidence" value="ECO:0000315"/>
    <property type="project" value="RGD"/>
</dbReference>
<dbReference type="GO" id="GO:0150103">
    <property type="term" value="P:reactive gliosis"/>
    <property type="evidence" value="ECO:0000315"/>
    <property type="project" value="RGD"/>
</dbReference>
<dbReference type="GO" id="GO:0017157">
    <property type="term" value="P:regulation of exocytosis"/>
    <property type="evidence" value="ECO:0000315"/>
    <property type="project" value="RGD"/>
</dbReference>
<dbReference type="GO" id="GO:0099566">
    <property type="term" value="P:regulation of postsynaptic cytosolic calcium ion concentration"/>
    <property type="evidence" value="ECO:0000266"/>
    <property type="project" value="RGD"/>
</dbReference>
<dbReference type="GO" id="GO:0032252">
    <property type="term" value="P:secretory granule localization"/>
    <property type="evidence" value="ECO:0000314"/>
    <property type="project" value="RGD"/>
</dbReference>
<dbReference type="GO" id="GO:0050808">
    <property type="term" value="P:synapse organization"/>
    <property type="evidence" value="ECO:0000266"/>
    <property type="project" value="RGD"/>
</dbReference>
<dbReference type="GO" id="GO:0030050">
    <property type="term" value="P:vesicle transport along actin filament"/>
    <property type="evidence" value="ECO:0000315"/>
    <property type="project" value="RGD"/>
</dbReference>
<dbReference type="GO" id="GO:0016192">
    <property type="term" value="P:vesicle-mediated transport"/>
    <property type="evidence" value="ECO:0000250"/>
    <property type="project" value="UniProtKB"/>
</dbReference>
<dbReference type="GO" id="GO:0007601">
    <property type="term" value="P:visual perception"/>
    <property type="evidence" value="ECO:0000266"/>
    <property type="project" value="RGD"/>
</dbReference>
<dbReference type="CDD" id="cd15478">
    <property type="entry name" value="Myo5a_CBD"/>
    <property type="match status" value="1"/>
</dbReference>
<dbReference type="CDD" id="cd01380">
    <property type="entry name" value="MYSc_Myo5"/>
    <property type="match status" value="1"/>
</dbReference>
<dbReference type="FunFam" id="1.20.58.530:FF:000002">
    <property type="entry name" value="Class V myosin"/>
    <property type="match status" value="1"/>
</dbReference>
<dbReference type="FunFam" id="1.10.10.820:FF:000001">
    <property type="entry name" value="Myosin heavy chain"/>
    <property type="match status" value="1"/>
</dbReference>
<dbReference type="FunFam" id="1.20.5.190:FF:000006">
    <property type="entry name" value="Myosin VA"/>
    <property type="match status" value="1"/>
</dbReference>
<dbReference type="FunFam" id="3.40.850.10:FF:000089">
    <property type="entry name" value="Myosin VC"/>
    <property type="match status" value="1"/>
</dbReference>
<dbReference type="FunFam" id="3.30.70.1590:FF:000003">
    <property type="entry name" value="Myosin-Va isoform 1"/>
    <property type="match status" value="1"/>
</dbReference>
<dbReference type="FunFam" id="1.20.5.190:FF:000001">
    <property type="entry name" value="unconventional myosin-Va"/>
    <property type="match status" value="2"/>
</dbReference>
<dbReference type="Gene3D" id="1.10.10.820">
    <property type="match status" value="1"/>
</dbReference>
<dbReference type="Gene3D" id="1.20.5.190">
    <property type="match status" value="3"/>
</dbReference>
<dbReference type="Gene3D" id="1.20.58.530">
    <property type="match status" value="1"/>
</dbReference>
<dbReference type="Gene3D" id="3.30.70.1590">
    <property type="match status" value="1"/>
</dbReference>
<dbReference type="Gene3D" id="3.40.850.10">
    <property type="entry name" value="Kinesin motor domain"/>
    <property type="match status" value="1"/>
</dbReference>
<dbReference type="Gene3D" id="1.20.120.720">
    <property type="entry name" value="Myosin VI head, motor domain, U50 subdomain"/>
    <property type="match status" value="1"/>
</dbReference>
<dbReference type="InterPro" id="IPR002710">
    <property type="entry name" value="Dilute_dom"/>
</dbReference>
<dbReference type="InterPro" id="IPR000048">
    <property type="entry name" value="IQ_motif_EF-hand-BS"/>
</dbReference>
<dbReference type="InterPro" id="IPR036961">
    <property type="entry name" value="Kinesin_motor_dom_sf"/>
</dbReference>
<dbReference type="InterPro" id="IPR037988">
    <property type="entry name" value="Myo5a_CBD"/>
</dbReference>
<dbReference type="InterPro" id="IPR001609">
    <property type="entry name" value="Myosin_head_motor_dom-like"/>
</dbReference>
<dbReference type="InterPro" id="IPR004009">
    <property type="entry name" value="Myosin_N"/>
</dbReference>
<dbReference type="InterPro" id="IPR036103">
    <property type="entry name" value="MYSc_Myo5"/>
</dbReference>
<dbReference type="InterPro" id="IPR027417">
    <property type="entry name" value="P-loop_NTPase"/>
</dbReference>
<dbReference type="PANTHER" id="PTHR13140">
    <property type="entry name" value="MYOSIN"/>
    <property type="match status" value="1"/>
</dbReference>
<dbReference type="PANTHER" id="PTHR13140:SF273">
    <property type="entry name" value="UNCONVENTIONAL MYOSIN-VA"/>
    <property type="match status" value="1"/>
</dbReference>
<dbReference type="Pfam" id="PF01843">
    <property type="entry name" value="DIL"/>
    <property type="match status" value="1"/>
</dbReference>
<dbReference type="Pfam" id="PF00612">
    <property type="entry name" value="IQ"/>
    <property type="match status" value="6"/>
</dbReference>
<dbReference type="Pfam" id="PF00063">
    <property type="entry name" value="Myosin_head"/>
    <property type="match status" value="1"/>
</dbReference>
<dbReference type="PRINTS" id="PR00193">
    <property type="entry name" value="MYOSINHEAVY"/>
</dbReference>
<dbReference type="SMART" id="SM01132">
    <property type="entry name" value="DIL"/>
    <property type="match status" value="1"/>
</dbReference>
<dbReference type="SMART" id="SM00015">
    <property type="entry name" value="IQ"/>
    <property type="match status" value="6"/>
</dbReference>
<dbReference type="SMART" id="SM00242">
    <property type="entry name" value="MYSc"/>
    <property type="match status" value="1"/>
</dbReference>
<dbReference type="SUPFAM" id="SSF52540">
    <property type="entry name" value="P-loop containing nucleoside triphosphate hydrolases"/>
    <property type="match status" value="3"/>
</dbReference>
<dbReference type="PROSITE" id="PS51126">
    <property type="entry name" value="DILUTE"/>
    <property type="match status" value="1"/>
</dbReference>
<dbReference type="PROSITE" id="PS50096">
    <property type="entry name" value="IQ"/>
    <property type="match status" value="6"/>
</dbReference>
<dbReference type="PROSITE" id="PS51456">
    <property type="entry name" value="MYOSIN_MOTOR"/>
    <property type="match status" value="1"/>
</dbReference>
<dbReference type="PROSITE" id="PS51844">
    <property type="entry name" value="SH3_LIKE"/>
    <property type="match status" value="1"/>
</dbReference>
<comment type="function">
    <text evidence="1 2 9">Processive actin-based motor that can move in large steps approximating the 36-nm pseudo-repeat of the actin filament. Can hydrolyze ATP in the presence of actin, which is essential for its function as a motor protein (By similarity). Involved in melanosome transport. Also mediates the transport of vesicles to the plasma membrane (By similarity). May also be required for some polarization process involved in dendrite formation.</text>
</comment>
<comment type="catalytic activity">
    <reaction evidence="2">
        <text>ATP + H2O = ADP + phosphate + H(+)</text>
        <dbReference type="Rhea" id="RHEA:13065"/>
        <dbReference type="ChEBI" id="CHEBI:15377"/>
        <dbReference type="ChEBI" id="CHEBI:15378"/>
        <dbReference type="ChEBI" id="CHEBI:30616"/>
        <dbReference type="ChEBI" id="CHEBI:43474"/>
        <dbReference type="ChEBI" id="CHEBI:456216"/>
    </reaction>
    <physiologicalReaction direction="left-to-right" evidence="2">
        <dbReference type="Rhea" id="RHEA:13066"/>
    </physiologicalReaction>
</comment>
<comment type="subunit">
    <text evidence="1 9">May be a homodimer, which associates with multiple calmodulin or myosin light chains (By similarity). Interacts with RIPL2, the interaction is required for its role in dendrite formation (PubMed:19812310). Interacts with MLPH. Interacts with SYTL4 (By similarity). Interacts with MYRIP (By similarity). Interacts with RAB10; mediates the transport to the plasma membrane of SLC2A4/GLUT4 storage vesicles (By similarity). Interacts with FMR1; this interaction occurs in association with polyribosome (By similarity).</text>
</comment>
<comment type="disease">
    <text>Defects in Myo5a are a cause of Dilute-opisthotonus (dop). Dop rats have diluted coat color and are occasionally associated with severe neurological disorders.</text>
</comment>
<comment type="similarity">
    <text evidence="10">Belongs to the TRAFAC class myosin-kinesin ATPase superfamily. Myosin family.</text>
</comment>
<sequence>MAASELYTKFARVWIPDPEEVWKSAELLKDYKPGDKVLLLHLEEGKDLEYRLDPKTSELPHLRNPDILVGENDLTALSYLHEPAVLHNLRVRFIDSKLIYTYCGIVLVAINPYEQLPIYGEDIINAYSGQNMGDMDPHIFAVAEEAYKQMARDERNQSIIVSGESGAGKTVSAKYAMRYFATVSGSASEANVEEKVLASNPIMESIGNAKTTRNDNSSRFGKYIEIGFDKRYRIIGANMRTYLLEKSRVVFQAEEERNYHIFYQLCASAKLPEFKMLRLGNADSFHYTKQGGSPMIEGVDDAKEMAHTRQACTLLGISESYQMGIFRILAGILHLGNVGFASRDSDSCTIPPKHEPLIIFCDLMGVDYEEMCHWLCHRKLATATETYIKPISKLQATNARDALAKHIYAKLFNWIVGHVNQALHSAVKQHSFIGVLDIYGFETFEINSFEQFCINYANEKLQQQFNMHVFKLEQEEYMKEQIPWTLIDFYDNQPCINLIESKLGILDLLDEECKMPKGTDDTWAQKLYNTHLNKCALFEKPRMSNKAFIIKHFADKVEYQCEGFLEKNKDTVFEEQIKVLKSSKFKMLPELFQDDEKAISPTSATSSGRTPLTRVPVKPTKGRPGQTAKEHKKTVGLQFRNSLHLLMETLNATTPHYVRCIKPNDFKFPFTFDEKRAVQQLRACGVLETIRISAAGFPSRWTYQEFFSRYRVLMKQKDVLGDRKQTCQNVLEKLILDKDKYQFGKTKIFFRAGQVAYLEKLRADKLRAACIRIQKTIRGWLLRKRYLCMQRAAITVQRYVRGYQARCYAKFLRRTKAATTIQKYWRMYVVRRKYKIRRAATIVLQSYLRGYLARNRYRKILREHKAVIIQKRVRGWLARTHYKRTMKAIIYLQCCFRRMMAKRELKKLKIEARSVERYKKLHIGMENKIMQLQRKVDEQNKDYKCLMEKLTNLEGVYNSETEKLRNDVERLQLSEEEAKVATGRVLSLQEEIAKLRKDLEQTRSEKKSIEERADKYKQETEQLVSNLKEENTLLKQEKETLNHLMVEQAKEMTETMERKLVEETKQLELDLNDERLRYQNLLNEFSRLEERYDDLKEEMTLMLNVPKPGHKRTDSTHSSNESEYTFSSEFAETEDIAPRTEEPTEKKVPLDMSLFLKLQKRVTELGQEKQLMQDELDRKEEQVLRSKAKGGERPQIRGAELGYESLKRQELESENKKLKNELNELRKALSEKSAPEVNAPGAPAYRVLMEQLTAVSEELDVRKEEVLILRSQLVSQKEAIQPKDDKNTMTDSTILLEDVQKMKDKGEIAQAYIGLKETNRLLESQLQSQKRSHENEAEALRGEIQSLKEENNRQQQLLAQNLQLPPEARIEASLQHEITRLTNENLDLMEQLEKQDKTVRKLKKQLKVFAKKIGELEVGQMENISPGQIIDEPIRPVNIPRKGKDFQGMLEYKREDEQKLVKNLILELKPRGVAVNLISGLPAYILFMCVRHADYLDDDQKVRSLLTSTINSIKKVLKKRGDDFETVSFWLSNTCRFLHCLKQYSGEEGFMKHNTSRQNEHCLTNFDLAEYRQVLSDLAIQIYQQLVRVLENILQPMIVSGMLEHETIQGVSGVKPTGLRKRTSSIADEGTYTLDSILRQLNSFHSVMCQHGMDPELIKQVVKQMFYIVGAITLNNLLLRKDMCSWSKGMQIRYNVSQLEEWLRDKNLMNSGAKETLEPLIQAAQLLQVKKKTDDDAEAICSMCNALTTAQIVKVLNLYTPVNEFEERVSVSFIRTIQVRLRDRKDSPQLLMDAKHIFPVTFPFNPSSLALETIQIPASLGLGFIARV</sequence>
<keyword id="KW-0007">Acetylation</keyword>
<keyword id="KW-0009">Actin-binding</keyword>
<keyword id="KW-0067">ATP-binding</keyword>
<keyword id="KW-0112">Calmodulin-binding</keyword>
<keyword id="KW-0175">Coiled coil</keyword>
<keyword id="KW-0505">Motor protein</keyword>
<keyword id="KW-0518">Myosin</keyword>
<keyword id="KW-0547">Nucleotide-binding</keyword>
<keyword id="KW-0597">Phosphoprotein</keyword>
<keyword id="KW-0653">Protein transport</keyword>
<keyword id="KW-1185">Reference proteome</keyword>
<keyword id="KW-0677">Repeat</keyword>
<keyword id="KW-0813">Transport</keyword>
<organism>
    <name type="scientific">Rattus norvegicus</name>
    <name type="common">Rat</name>
    <dbReference type="NCBI Taxonomy" id="10116"/>
    <lineage>
        <taxon>Eukaryota</taxon>
        <taxon>Metazoa</taxon>
        <taxon>Chordata</taxon>
        <taxon>Craniata</taxon>
        <taxon>Vertebrata</taxon>
        <taxon>Euteleostomi</taxon>
        <taxon>Mammalia</taxon>
        <taxon>Eutheria</taxon>
        <taxon>Euarchontoglires</taxon>
        <taxon>Glires</taxon>
        <taxon>Rodentia</taxon>
        <taxon>Myomorpha</taxon>
        <taxon>Muroidea</taxon>
        <taxon>Muridae</taxon>
        <taxon>Murinae</taxon>
        <taxon>Rattus</taxon>
    </lineage>
</organism>
<gene>
    <name type="primary">Myo5a</name>
</gene>
<name>MYO5A_RAT</name>
<feature type="initiator methionine" description="Removed" evidence="2">
    <location>
        <position position="1"/>
    </location>
</feature>
<feature type="chain" id="PRO_0000123458" description="Unconventional myosin-Va">
    <location>
        <begin position="2"/>
        <end position="1828"/>
    </location>
</feature>
<feature type="domain" description="Myosin N-terminal SH3-like" evidence="7">
    <location>
        <begin position="8"/>
        <end position="60"/>
    </location>
</feature>
<feature type="domain" description="Myosin motor" evidence="6">
    <location>
        <begin position="69"/>
        <end position="763"/>
    </location>
</feature>
<feature type="domain" description="IQ 1" evidence="4">
    <location>
        <begin position="766"/>
        <end position="788"/>
    </location>
</feature>
<feature type="domain" description="IQ 2" evidence="4">
    <location>
        <begin position="789"/>
        <end position="813"/>
    </location>
</feature>
<feature type="domain" description="IQ 3" evidence="4">
    <location>
        <begin position="814"/>
        <end position="836"/>
    </location>
</feature>
<feature type="domain" description="IQ 4" evidence="4">
    <location>
        <begin position="837"/>
        <end position="861"/>
    </location>
</feature>
<feature type="domain" description="IQ 5" evidence="4">
    <location>
        <begin position="862"/>
        <end position="884"/>
    </location>
</feature>
<feature type="domain" description="IQ 6" evidence="4">
    <location>
        <begin position="885"/>
        <end position="914"/>
    </location>
</feature>
<feature type="domain" description="Dilute" evidence="5">
    <location>
        <begin position="1507"/>
        <end position="1783"/>
    </location>
</feature>
<feature type="region of interest" description="Disordered" evidence="8">
    <location>
        <begin position="599"/>
        <end position="633"/>
    </location>
</feature>
<feature type="region of interest" description="Actin-binding" evidence="3">
    <location>
        <begin position="643"/>
        <end position="665"/>
    </location>
</feature>
<feature type="region of interest" description="Disordered" evidence="8">
    <location>
        <begin position="1105"/>
        <end position="1147"/>
    </location>
</feature>
<feature type="coiled-coil region" evidence="3">
    <location>
        <begin position="914"/>
        <end position="1239"/>
    </location>
</feature>
<feature type="coiled-coil region" evidence="3">
    <location>
        <begin position="1314"/>
        <end position="1418"/>
    </location>
</feature>
<feature type="compositionally biased region" description="Polar residues" evidence="8">
    <location>
        <begin position="600"/>
        <end position="610"/>
    </location>
</feature>
<feature type="compositionally biased region" description="Polar residues" evidence="8">
    <location>
        <begin position="1116"/>
        <end position="1130"/>
    </location>
</feature>
<feature type="compositionally biased region" description="Basic and acidic residues" evidence="8">
    <location>
        <begin position="1136"/>
        <end position="1147"/>
    </location>
</feature>
<feature type="binding site" evidence="3">
    <location>
        <begin position="163"/>
        <end position="170"/>
    </location>
    <ligand>
        <name>ATP</name>
        <dbReference type="ChEBI" id="CHEBI:30616"/>
    </ligand>
</feature>
<feature type="modified residue" description="N-acetylalanine" evidence="2">
    <location>
        <position position="2"/>
    </location>
</feature>
<feature type="modified residue" description="Phosphoserine" evidence="12">
    <location>
        <position position="600"/>
    </location>
</feature>
<feature type="modified residue" description="Phosphothreonine" evidence="11">
    <location>
        <position position="1032"/>
    </location>
</feature>
<feature type="modified residue" description="Phosphoserine" evidence="12">
    <location>
        <position position="1425"/>
    </location>
</feature>
<feature type="modified residue" description="Phosphoserine" evidence="12">
    <location>
        <position position="1625"/>
    </location>
</feature>
<feature type="modified residue" description="Phosphothreonine" evidence="3">
    <location>
        <position position="1733"/>
    </location>
</feature>
<proteinExistence type="evidence at protein level"/>
<evidence type="ECO:0000250" key="1">
    <source>
        <dbReference type="UniProtKB" id="Q99104"/>
    </source>
</evidence>
<evidence type="ECO:0000250" key="2">
    <source>
        <dbReference type="UniProtKB" id="Q9Y4I1"/>
    </source>
</evidence>
<evidence type="ECO:0000255" key="3"/>
<evidence type="ECO:0000255" key="4">
    <source>
        <dbReference type="PROSITE-ProRule" id="PRU00116"/>
    </source>
</evidence>
<evidence type="ECO:0000255" key="5">
    <source>
        <dbReference type="PROSITE-ProRule" id="PRU00503"/>
    </source>
</evidence>
<evidence type="ECO:0000255" key="6">
    <source>
        <dbReference type="PROSITE-ProRule" id="PRU00782"/>
    </source>
</evidence>
<evidence type="ECO:0000255" key="7">
    <source>
        <dbReference type="PROSITE-ProRule" id="PRU01190"/>
    </source>
</evidence>
<evidence type="ECO:0000256" key="8">
    <source>
        <dbReference type="SAM" id="MobiDB-lite"/>
    </source>
</evidence>
<evidence type="ECO:0000269" key="9">
    <source>
    </source>
</evidence>
<evidence type="ECO:0000305" key="10"/>
<evidence type="ECO:0007744" key="11">
    <source>
    </source>
</evidence>
<evidence type="ECO:0007744" key="12">
    <source>
    </source>
</evidence>